<protein>
    <recommendedName>
        <fullName>Uncharacterized protein RT0031</fullName>
    </recommendedName>
</protein>
<sequence>MKTLKALKIFIIVYISSVSLESFAGFGESCSNLPITSDGYLETYTAYGYIIRSIDMKDPRGNCNPYTSSITFCFKNVEGSTSPCTIYTLNEGDARKISDLSTDNNPNLGANTVLKNIVLTVKKFGNDLCLAMPTSRGPMPVACKSLNATPAPTNPKYENCNIGKSCYTGANYSQSLINFSGLAVQCLSETLNKIFFTGNSCSSQDQNSRITHLAAFSTFQGYLKRIIGAALILYTMFFAFNMALNKEYATTEKITLFIIKFLFVVYFSIGLEPLNFSGGQTVKENGMLKYGLPLLTGAAPDFAEMIFNAAGSRGLCQFDNSKYKDGYKFYGLWDAIDCRIGYYLGLDLLYNIDKNGILGHSVGNGPGGNNKPIPNFDPDSKKDRPHDLSKAGALRFFTVMFGFLMSGHIIILVAGIAFSVIFLSILLYFITHYLVCMITIYVMTYISPIFIPMVLFTRTKAYFDGWVKVCISCALQPAVVAGFIALLITMYDSAIFKNCEFLRYDYEKGDIRFSTFELRLPSIDADKCQESFGYKMLKYYAGEGWEEHLLILFPIKSIVRDVVSILAELLCVLVFSVIFYYFSKSIGRFAADLTNGPNMDAVTASPTKIVDLVKKGAAFLQDASSVHAQGKSPVEDKPDIGSKRKDGVQQGEDSENSSGGELADLASGSGGGKL</sequence>
<gene>
    <name type="ordered locus">RT0031</name>
</gene>
<feature type="signal peptide" evidence="1">
    <location>
        <begin position="1"/>
        <end position="24"/>
    </location>
</feature>
<feature type="chain" id="PRO_0000269211" description="Uncharacterized protein RT0031">
    <location>
        <begin position="25"/>
        <end position="674"/>
    </location>
</feature>
<feature type="transmembrane region" description="Helical" evidence="1">
    <location>
        <begin position="226"/>
        <end position="246"/>
    </location>
</feature>
<feature type="transmembrane region" description="Helical" evidence="1">
    <location>
        <begin position="254"/>
        <end position="274"/>
    </location>
</feature>
<feature type="transmembrane region" description="Helical" evidence="1">
    <location>
        <begin position="409"/>
        <end position="429"/>
    </location>
</feature>
<feature type="transmembrane region" description="Helical" evidence="1">
    <location>
        <begin position="436"/>
        <end position="456"/>
    </location>
</feature>
<feature type="transmembrane region" description="Helical" evidence="1">
    <location>
        <begin position="469"/>
        <end position="489"/>
    </location>
</feature>
<feature type="transmembrane region" description="Helical" evidence="1">
    <location>
        <begin position="562"/>
        <end position="582"/>
    </location>
</feature>
<feature type="region of interest" description="Disordered" evidence="2">
    <location>
        <begin position="363"/>
        <end position="384"/>
    </location>
</feature>
<feature type="region of interest" description="Disordered" evidence="2">
    <location>
        <begin position="624"/>
        <end position="674"/>
    </location>
</feature>
<feature type="compositionally biased region" description="Basic and acidic residues" evidence="2">
    <location>
        <begin position="633"/>
        <end position="647"/>
    </location>
</feature>
<name>Y031_RICTY</name>
<evidence type="ECO:0000255" key="1"/>
<evidence type="ECO:0000256" key="2">
    <source>
        <dbReference type="SAM" id="MobiDB-lite"/>
    </source>
</evidence>
<evidence type="ECO:0000305" key="3"/>
<organism>
    <name type="scientific">Rickettsia typhi (strain ATCC VR-144 / Wilmington)</name>
    <dbReference type="NCBI Taxonomy" id="257363"/>
    <lineage>
        <taxon>Bacteria</taxon>
        <taxon>Pseudomonadati</taxon>
        <taxon>Pseudomonadota</taxon>
        <taxon>Alphaproteobacteria</taxon>
        <taxon>Rickettsiales</taxon>
        <taxon>Rickettsiaceae</taxon>
        <taxon>Rickettsieae</taxon>
        <taxon>Rickettsia</taxon>
        <taxon>typhus group</taxon>
    </lineage>
</organism>
<accession>Q68XX3</accession>
<proteinExistence type="inferred from homology"/>
<keyword id="KW-1003">Cell membrane</keyword>
<keyword id="KW-0472">Membrane</keyword>
<keyword id="KW-0732">Signal</keyword>
<keyword id="KW-0812">Transmembrane</keyword>
<keyword id="KW-1133">Transmembrane helix</keyword>
<dbReference type="EMBL" id="AE017197">
    <property type="protein sequence ID" value="AAU03519.1"/>
    <property type="molecule type" value="Genomic_DNA"/>
</dbReference>
<dbReference type="RefSeq" id="WP_011190506.1">
    <property type="nucleotide sequence ID" value="NC_006142.1"/>
</dbReference>
<dbReference type="KEGG" id="rty:RT0031"/>
<dbReference type="eggNOG" id="COG3704">
    <property type="taxonomic scope" value="Bacteria"/>
</dbReference>
<dbReference type="HOGENOM" id="CLU_027273_0_0_5"/>
<dbReference type="OrthoDB" id="7163542at2"/>
<dbReference type="Proteomes" id="UP000000604">
    <property type="component" value="Chromosome"/>
</dbReference>
<dbReference type="GO" id="GO:0005886">
    <property type="term" value="C:plasma membrane"/>
    <property type="evidence" value="ECO:0007669"/>
    <property type="project" value="UniProtKB-SubCell"/>
</dbReference>
<dbReference type="GO" id="GO:0030255">
    <property type="term" value="P:protein secretion by the type IV secretion system"/>
    <property type="evidence" value="ECO:0007669"/>
    <property type="project" value="InterPro"/>
</dbReference>
<dbReference type="InterPro" id="IPR007688">
    <property type="entry name" value="Conjugal_tfr_TrbL/VirB6"/>
</dbReference>
<dbReference type="Pfam" id="PF04610">
    <property type="entry name" value="TrbL"/>
    <property type="match status" value="1"/>
</dbReference>
<reference key="1">
    <citation type="journal article" date="2004" name="J. Bacteriol.">
        <title>Complete genome sequence of Rickettsia typhi and comparison with sequences of other Rickettsiae.</title>
        <authorList>
            <person name="McLeod M.P."/>
            <person name="Qin X."/>
            <person name="Karpathy S.E."/>
            <person name="Gioia J."/>
            <person name="Highlander S.K."/>
            <person name="Fox G.E."/>
            <person name="McNeill T.Z."/>
            <person name="Jiang H."/>
            <person name="Muzny D."/>
            <person name="Jacob L.S."/>
            <person name="Hawes A.C."/>
            <person name="Sodergren E."/>
            <person name="Gill R."/>
            <person name="Hume J."/>
            <person name="Morgan M."/>
            <person name="Fan G."/>
            <person name="Amin A.G."/>
            <person name="Gibbs R.A."/>
            <person name="Hong C."/>
            <person name="Yu X.-J."/>
            <person name="Walker D.H."/>
            <person name="Weinstock G.M."/>
        </authorList>
    </citation>
    <scope>NUCLEOTIDE SEQUENCE [LARGE SCALE GENOMIC DNA]</scope>
    <source>
        <strain>ATCC VR-144 / Wilmington</strain>
    </source>
</reference>
<comment type="subcellular location">
    <subcellularLocation>
        <location evidence="3">Cell membrane</location>
        <topology evidence="3">Multi-pass membrane protein</topology>
    </subcellularLocation>
</comment>
<comment type="similarity">
    <text evidence="3">Belongs to the TrbL/VirB6 family.</text>
</comment>